<sequence>MKYLNQHEAISVDEELFNEYKFSVDQLMELAGLSCAHVINDCYGSPQSTVKRKVLVCCGPGNNGGDGLVAARHLKLMNFDAHVYYPKRTEKDLFINLQHQCESMGITVSKDCPTLEWVEGEFGLIVDALFGFSFKPPVRESFAPIMDVLNKSKVPIVSVDIPSGWHVEEGPQDECNIQPDCLISLTAPKLCAKKLTNAKHYLGGRFVPPKLQDKYAMELPTYEGNNLFVKLS</sequence>
<name>NNRE_AEDAE</name>
<organism>
    <name type="scientific">Aedes aegypti</name>
    <name type="common">Yellowfever mosquito</name>
    <name type="synonym">Culex aegypti</name>
    <dbReference type="NCBI Taxonomy" id="7159"/>
    <lineage>
        <taxon>Eukaryota</taxon>
        <taxon>Metazoa</taxon>
        <taxon>Ecdysozoa</taxon>
        <taxon>Arthropoda</taxon>
        <taxon>Hexapoda</taxon>
        <taxon>Insecta</taxon>
        <taxon>Pterygota</taxon>
        <taxon>Neoptera</taxon>
        <taxon>Endopterygota</taxon>
        <taxon>Diptera</taxon>
        <taxon>Nematocera</taxon>
        <taxon>Culicoidea</taxon>
        <taxon>Culicidae</taxon>
        <taxon>Culicinae</taxon>
        <taxon>Aedini</taxon>
        <taxon>Aedes</taxon>
        <taxon>Stegomyia</taxon>
    </lineage>
</organism>
<comment type="function">
    <text evidence="1">Catalyzes the epimerization of the S- and R-forms of NAD(P)HX, a damaged form of NAD(P)H that is a result of enzymatic or heat-dependent hydration. This is a prerequisite for the S-specific NAD(P)H-hydrate dehydratase to allow the repair of both epimers of NAD(P)HX.</text>
</comment>
<comment type="catalytic activity">
    <reaction>
        <text>(6R)-NADHX = (6S)-NADHX</text>
        <dbReference type="Rhea" id="RHEA:32215"/>
        <dbReference type="ChEBI" id="CHEBI:64074"/>
        <dbReference type="ChEBI" id="CHEBI:64075"/>
        <dbReference type="EC" id="5.1.99.6"/>
    </reaction>
</comment>
<comment type="catalytic activity">
    <reaction>
        <text>(6R)-NADPHX = (6S)-NADPHX</text>
        <dbReference type="Rhea" id="RHEA:32227"/>
        <dbReference type="ChEBI" id="CHEBI:64076"/>
        <dbReference type="ChEBI" id="CHEBI:64077"/>
        <dbReference type="EC" id="5.1.99.6"/>
    </reaction>
</comment>
<comment type="cofactor">
    <cofactor evidence="1">
        <name>K(+)</name>
        <dbReference type="ChEBI" id="CHEBI:29103"/>
    </cofactor>
    <text evidence="1">Binds 1 potassium ion per subunit.</text>
</comment>
<comment type="similarity">
    <text evidence="1">Belongs to the NnrE/AIBP family.</text>
</comment>
<comment type="sequence caution" evidence="2">
    <conflict type="erroneous gene model prediction">
        <sequence resource="EMBL-CDS" id="EAT45889"/>
    </conflict>
</comment>
<feature type="chain" id="PRO_0000416315" description="NAD(P)H-hydrate epimerase">
    <location>
        <begin position="1"/>
        <end position="232"/>
    </location>
</feature>
<feature type="domain" description="YjeF N-terminal" evidence="1">
    <location>
        <begin position="9"/>
        <end position="219"/>
    </location>
</feature>
<feature type="binding site" evidence="1">
    <location>
        <begin position="62"/>
        <end position="66"/>
    </location>
    <ligand>
        <name>(6S)-NADPHX</name>
        <dbReference type="ChEBI" id="CHEBI:64076"/>
    </ligand>
</feature>
<feature type="binding site" evidence="1">
    <location>
        <position position="63"/>
    </location>
    <ligand>
        <name>K(+)</name>
        <dbReference type="ChEBI" id="CHEBI:29103"/>
    </ligand>
</feature>
<feature type="binding site" evidence="1">
    <location>
        <position position="127"/>
    </location>
    <ligand>
        <name>K(+)</name>
        <dbReference type="ChEBI" id="CHEBI:29103"/>
    </ligand>
</feature>
<feature type="binding site" evidence="1">
    <location>
        <begin position="131"/>
        <end position="137"/>
    </location>
    <ligand>
        <name>(6S)-NADPHX</name>
        <dbReference type="ChEBI" id="CHEBI:64076"/>
    </ligand>
</feature>
<feature type="binding site" evidence="1">
    <location>
        <position position="160"/>
    </location>
    <ligand>
        <name>(6S)-NADPHX</name>
        <dbReference type="ChEBI" id="CHEBI:64076"/>
    </ligand>
</feature>
<feature type="binding site" evidence="1">
    <location>
        <position position="163"/>
    </location>
    <ligand>
        <name>K(+)</name>
        <dbReference type="ChEBI" id="CHEBI:29103"/>
    </ligand>
</feature>
<protein>
    <recommendedName>
        <fullName evidence="1">NAD(P)H-hydrate epimerase</fullName>
        <ecNumber>5.1.99.6</ecNumber>
    </recommendedName>
    <alternativeName>
        <fullName evidence="1">NAD(P)HX epimerase</fullName>
    </alternativeName>
</protein>
<accession>Q17GW6</accession>
<proteinExistence type="inferred from homology"/>
<dbReference type="EC" id="5.1.99.6"/>
<dbReference type="EMBL" id="CH477255">
    <property type="protein sequence ID" value="EAT45889.1"/>
    <property type="status" value="ALT_SEQ"/>
    <property type="molecule type" value="Genomic_DNA"/>
</dbReference>
<dbReference type="RefSeq" id="XP_001656090.1">
    <property type="nucleotide sequence ID" value="XM_001656040.1"/>
</dbReference>
<dbReference type="SMR" id="Q17GW6"/>
<dbReference type="FunCoup" id="Q17GW6">
    <property type="interactions" value="1327"/>
</dbReference>
<dbReference type="STRING" id="7159.Q17GW6"/>
<dbReference type="PaxDb" id="7159-AAEL002874-PA"/>
<dbReference type="VEuPathDB" id="VectorBase:AAEL002874"/>
<dbReference type="eggNOG" id="KOG2585">
    <property type="taxonomic scope" value="Eukaryota"/>
</dbReference>
<dbReference type="HOGENOM" id="CLU_024853_3_0_1"/>
<dbReference type="InParanoid" id="Q17GW6"/>
<dbReference type="Proteomes" id="UP000008820">
    <property type="component" value="Unassembled WGS sequence"/>
</dbReference>
<dbReference type="Proteomes" id="UP000682892">
    <property type="component" value="Unassembled WGS sequence"/>
</dbReference>
<dbReference type="GO" id="GO:0005739">
    <property type="term" value="C:mitochondrion"/>
    <property type="evidence" value="ECO:0007669"/>
    <property type="project" value="TreeGrafter"/>
</dbReference>
<dbReference type="GO" id="GO:0046872">
    <property type="term" value="F:metal ion binding"/>
    <property type="evidence" value="ECO:0007669"/>
    <property type="project" value="UniProtKB-KW"/>
</dbReference>
<dbReference type="GO" id="GO:0052856">
    <property type="term" value="F:NAD(P)HX epimerase activity"/>
    <property type="evidence" value="ECO:0007669"/>
    <property type="project" value="UniProtKB-UniRule"/>
</dbReference>
<dbReference type="GO" id="GO:0000166">
    <property type="term" value="F:nucleotide binding"/>
    <property type="evidence" value="ECO:0007669"/>
    <property type="project" value="UniProtKB-KW"/>
</dbReference>
<dbReference type="Gene3D" id="3.40.50.10260">
    <property type="entry name" value="YjeF N-terminal domain"/>
    <property type="match status" value="1"/>
</dbReference>
<dbReference type="HAMAP" id="MF_01966">
    <property type="entry name" value="NADHX_epimerase"/>
    <property type="match status" value="1"/>
</dbReference>
<dbReference type="InterPro" id="IPR004443">
    <property type="entry name" value="YjeF_N_dom"/>
</dbReference>
<dbReference type="InterPro" id="IPR036652">
    <property type="entry name" value="YjeF_N_dom_sf"/>
</dbReference>
<dbReference type="InterPro" id="IPR032976">
    <property type="entry name" value="YJEFN_prot_NAXE-like"/>
</dbReference>
<dbReference type="NCBIfam" id="TIGR00197">
    <property type="entry name" value="yjeF_nterm"/>
    <property type="match status" value="1"/>
</dbReference>
<dbReference type="PANTHER" id="PTHR13232">
    <property type="entry name" value="NAD(P)H-HYDRATE EPIMERASE"/>
    <property type="match status" value="1"/>
</dbReference>
<dbReference type="PANTHER" id="PTHR13232:SF10">
    <property type="entry name" value="NAD(P)H-HYDRATE EPIMERASE"/>
    <property type="match status" value="1"/>
</dbReference>
<dbReference type="Pfam" id="PF03853">
    <property type="entry name" value="YjeF_N"/>
    <property type="match status" value="1"/>
</dbReference>
<dbReference type="SUPFAM" id="SSF64153">
    <property type="entry name" value="YjeF N-terminal domain-like"/>
    <property type="match status" value="1"/>
</dbReference>
<dbReference type="PROSITE" id="PS51385">
    <property type="entry name" value="YJEF_N"/>
    <property type="match status" value="1"/>
</dbReference>
<gene>
    <name type="ORF">AAEL002874</name>
</gene>
<reference key="1">
    <citation type="journal article" date="2007" name="Science">
        <title>Genome sequence of Aedes aegypti, a major arbovirus vector.</title>
        <authorList>
            <person name="Nene V."/>
            <person name="Wortman J.R."/>
            <person name="Lawson D."/>
            <person name="Haas B.J."/>
            <person name="Kodira C.D."/>
            <person name="Tu Z.J."/>
            <person name="Loftus B.J."/>
            <person name="Xi Z."/>
            <person name="Megy K."/>
            <person name="Grabherr M."/>
            <person name="Ren Q."/>
            <person name="Zdobnov E.M."/>
            <person name="Lobo N.F."/>
            <person name="Campbell K.S."/>
            <person name="Brown S.E."/>
            <person name="Bonaldo M.F."/>
            <person name="Zhu J."/>
            <person name="Sinkins S.P."/>
            <person name="Hogenkamp D.G."/>
            <person name="Amedeo P."/>
            <person name="Arensburger P."/>
            <person name="Atkinson P.W."/>
            <person name="Bidwell S.L."/>
            <person name="Biedler J."/>
            <person name="Birney E."/>
            <person name="Bruggner R.V."/>
            <person name="Costas J."/>
            <person name="Coy M.R."/>
            <person name="Crabtree J."/>
            <person name="Crawford M."/>
            <person name="DeBruyn B."/>
            <person name="DeCaprio D."/>
            <person name="Eiglmeier K."/>
            <person name="Eisenstadt E."/>
            <person name="El-Dorry H."/>
            <person name="Gelbart W.M."/>
            <person name="Gomes S.L."/>
            <person name="Hammond M."/>
            <person name="Hannick L.I."/>
            <person name="Hogan J.R."/>
            <person name="Holmes M.H."/>
            <person name="Jaffe D."/>
            <person name="Johnston S.J."/>
            <person name="Kennedy R.C."/>
            <person name="Koo H."/>
            <person name="Kravitz S."/>
            <person name="Kriventseva E.V."/>
            <person name="Kulp D."/>
            <person name="Labutti K."/>
            <person name="Lee E."/>
            <person name="Li S."/>
            <person name="Lovin D.D."/>
            <person name="Mao C."/>
            <person name="Mauceli E."/>
            <person name="Menck C.F."/>
            <person name="Miller J.R."/>
            <person name="Montgomery P."/>
            <person name="Mori A."/>
            <person name="Nascimento A.L."/>
            <person name="Naveira H.F."/>
            <person name="Nusbaum C."/>
            <person name="O'Leary S.B."/>
            <person name="Orvis J."/>
            <person name="Pertea M."/>
            <person name="Quesneville H."/>
            <person name="Reidenbach K.R."/>
            <person name="Rogers Y.-H.C."/>
            <person name="Roth C.W."/>
            <person name="Schneider J.R."/>
            <person name="Schatz M."/>
            <person name="Shumway M."/>
            <person name="Stanke M."/>
            <person name="Stinson E.O."/>
            <person name="Tubio J.M.C."/>
            <person name="Vanzee J.P."/>
            <person name="Verjovski-Almeida S."/>
            <person name="Werner D."/>
            <person name="White O.R."/>
            <person name="Wyder S."/>
            <person name="Zeng Q."/>
            <person name="Zhao Q."/>
            <person name="Zhao Y."/>
            <person name="Hill C.A."/>
            <person name="Raikhel A.S."/>
            <person name="Soares M.B."/>
            <person name="Knudson D.L."/>
            <person name="Lee N.H."/>
            <person name="Galagan J."/>
            <person name="Salzberg S.L."/>
            <person name="Paulsen I.T."/>
            <person name="Dimopoulos G."/>
            <person name="Collins F.H."/>
            <person name="Bruce B."/>
            <person name="Fraser-Liggett C.M."/>
            <person name="Severson D.W."/>
        </authorList>
    </citation>
    <scope>NUCLEOTIDE SEQUENCE [LARGE SCALE GENOMIC DNA]</scope>
    <source>
        <strain>LVPib12</strain>
    </source>
</reference>
<evidence type="ECO:0000255" key="1">
    <source>
        <dbReference type="HAMAP-Rule" id="MF_03159"/>
    </source>
</evidence>
<evidence type="ECO:0000305" key="2"/>
<keyword id="KW-0413">Isomerase</keyword>
<keyword id="KW-0479">Metal-binding</keyword>
<keyword id="KW-0520">NAD</keyword>
<keyword id="KW-0521">NADP</keyword>
<keyword id="KW-0547">Nucleotide-binding</keyword>
<keyword id="KW-0630">Potassium</keyword>
<keyword id="KW-1185">Reference proteome</keyword>